<protein>
    <recommendedName>
        <fullName evidence="1">Large ribosomal subunit protein bL28</fullName>
    </recommendedName>
    <alternativeName>
        <fullName evidence="3">50S ribosomal protein L28</fullName>
    </alternativeName>
</protein>
<dbReference type="EMBL" id="BX571875">
    <property type="protein sequence ID" value="CAE17236.1"/>
    <property type="molecule type" value="Genomic_DNA"/>
</dbReference>
<dbReference type="RefSeq" id="WP_011148921.1">
    <property type="nucleotide sequence ID" value="NC_005126.1"/>
</dbReference>
<dbReference type="SMR" id="Q7MY29"/>
<dbReference type="STRING" id="243265.plu4864"/>
<dbReference type="GeneID" id="88807307"/>
<dbReference type="KEGG" id="plu:plu4864"/>
<dbReference type="eggNOG" id="COG0227">
    <property type="taxonomic scope" value="Bacteria"/>
</dbReference>
<dbReference type="HOGENOM" id="CLU_064548_3_1_6"/>
<dbReference type="OrthoDB" id="9805609at2"/>
<dbReference type="Proteomes" id="UP000002514">
    <property type="component" value="Chromosome"/>
</dbReference>
<dbReference type="GO" id="GO:0022625">
    <property type="term" value="C:cytosolic large ribosomal subunit"/>
    <property type="evidence" value="ECO:0007669"/>
    <property type="project" value="TreeGrafter"/>
</dbReference>
<dbReference type="GO" id="GO:0003735">
    <property type="term" value="F:structural constituent of ribosome"/>
    <property type="evidence" value="ECO:0007669"/>
    <property type="project" value="InterPro"/>
</dbReference>
<dbReference type="GO" id="GO:0006412">
    <property type="term" value="P:translation"/>
    <property type="evidence" value="ECO:0007669"/>
    <property type="project" value="UniProtKB-UniRule"/>
</dbReference>
<dbReference type="FunFam" id="2.30.170.40:FF:000001">
    <property type="entry name" value="50S ribosomal protein L28"/>
    <property type="match status" value="1"/>
</dbReference>
<dbReference type="Gene3D" id="2.30.170.40">
    <property type="entry name" value="Ribosomal protein L28/L24"/>
    <property type="match status" value="1"/>
</dbReference>
<dbReference type="HAMAP" id="MF_00373">
    <property type="entry name" value="Ribosomal_bL28"/>
    <property type="match status" value="1"/>
</dbReference>
<dbReference type="InterPro" id="IPR026569">
    <property type="entry name" value="Ribosomal_bL28"/>
</dbReference>
<dbReference type="InterPro" id="IPR034704">
    <property type="entry name" value="Ribosomal_bL28/bL31-like_sf"/>
</dbReference>
<dbReference type="InterPro" id="IPR001383">
    <property type="entry name" value="Ribosomal_bL28_bact-type"/>
</dbReference>
<dbReference type="InterPro" id="IPR037147">
    <property type="entry name" value="Ribosomal_bL28_sf"/>
</dbReference>
<dbReference type="NCBIfam" id="TIGR00009">
    <property type="entry name" value="L28"/>
    <property type="match status" value="1"/>
</dbReference>
<dbReference type="PANTHER" id="PTHR13528">
    <property type="entry name" value="39S RIBOSOMAL PROTEIN L28, MITOCHONDRIAL"/>
    <property type="match status" value="1"/>
</dbReference>
<dbReference type="PANTHER" id="PTHR13528:SF2">
    <property type="entry name" value="LARGE RIBOSOMAL SUBUNIT PROTEIN BL28M"/>
    <property type="match status" value="1"/>
</dbReference>
<dbReference type="Pfam" id="PF00830">
    <property type="entry name" value="Ribosomal_L28"/>
    <property type="match status" value="1"/>
</dbReference>
<dbReference type="SUPFAM" id="SSF143800">
    <property type="entry name" value="L28p-like"/>
    <property type="match status" value="1"/>
</dbReference>
<feature type="chain" id="PRO_0000178524" description="Large ribosomal subunit protein bL28">
    <location>
        <begin position="1"/>
        <end position="78"/>
    </location>
</feature>
<feature type="region of interest" description="Disordered" evidence="2">
    <location>
        <begin position="1"/>
        <end position="21"/>
    </location>
</feature>
<evidence type="ECO:0000255" key="1">
    <source>
        <dbReference type="HAMAP-Rule" id="MF_00373"/>
    </source>
</evidence>
<evidence type="ECO:0000256" key="2">
    <source>
        <dbReference type="SAM" id="MobiDB-lite"/>
    </source>
</evidence>
<evidence type="ECO:0000305" key="3"/>
<organism>
    <name type="scientific">Photorhabdus laumondii subsp. laumondii (strain DSM 15139 / CIP 105565 / TT01)</name>
    <name type="common">Photorhabdus luminescens subsp. laumondii</name>
    <dbReference type="NCBI Taxonomy" id="243265"/>
    <lineage>
        <taxon>Bacteria</taxon>
        <taxon>Pseudomonadati</taxon>
        <taxon>Pseudomonadota</taxon>
        <taxon>Gammaproteobacteria</taxon>
        <taxon>Enterobacterales</taxon>
        <taxon>Morganellaceae</taxon>
        <taxon>Photorhabdus</taxon>
    </lineage>
</organism>
<proteinExistence type="inferred from homology"/>
<comment type="similarity">
    <text evidence="1">Belongs to the bacterial ribosomal protein bL28 family.</text>
</comment>
<gene>
    <name evidence="1" type="primary">rpmB</name>
    <name type="ordered locus">plu4864</name>
</gene>
<sequence>MSRVCQVTGKRPMSGNNRSHALNATKRRFLPNLHSHRFWVESEKRFVTLRVSVKGMRVIDKKGIDAVLAELRTRGEKY</sequence>
<keyword id="KW-1185">Reference proteome</keyword>
<keyword id="KW-0687">Ribonucleoprotein</keyword>
<keyword id="KW-0689">Ribosomal protein</keyword>
<name>RL28_PHOLL</name>
<accession>Q7MY29</accession>
<reference key="1">
    <citation type="journal article" date="2003" name="Nat. Biotechnol.">
        <title>The genome sequence of the entomopathogenic bacterium Photorhabdus luminescens.</title>
        <authorList>
            <person name="Duchaud E."/>
            <person name="Rusniok C."/>
            <person name="Frangeul L."/>
            <person name="Buchrieser C."/>
            <person name="Givaudan A."/>
            <person name="Taourit S."/>
            <person name="Bocs S."/>
            <person name="Boursaux-Eude C."/>
            <person name="Chandler M."/>
            <person name="Charles J.-F."/>
            <person name="Dassa E."/>
            <person name="Derose R."/>
            <person name="Derzelle S."/>
            <person name="Freyssinet G."/>
            <person name="Gaudriault S."/>
            <person name="Medigue C."/>
            <person name="Lanois A."/>
            <person name="Powell K."/>
            <person name="Siguier P."/>
            <person name="Vincent R."/>
            <person name="Wingate V."/>
            <person name="Zouine M."/>
            <person name="Glaser P."/>
            <person name="Boemare N."/>
            <person name="Danchin A."/>
            <person name="Kunst F."/>
        </authorList>
    </citation>
    <scope>NUCLEOTIDE SEQUENCE [LARGE SCALE GENOMIC DNA]</scope>
    <source>
        <strain>DSM 15139 / CIP 105565 / TT01</strain>
    </source>
</reference>